<comment type="function">
    <text evidence="1">Specifically methylates the N7 position of a guanine in 16S rRNA.</text>
</comment>
<comment type="subcellular location">
    <subcellularLocation>
        <location evidence="1">Cytoplasm</location>
    </subcellularLocation>
</comment>
<comment type="similarity">
    <text evidence="1">Belongs to the methyltransferase superfamily. RNA methyltransferase RsmG family.</text>
</comment>
<name>RSMG_LIMRJ</name>
<proteinExistence type="inferred from homology"/>
<accession>B2G582</accession>
<sequence>MNPEQFQQALADHGITLSAEQMQQFADYYQLLVETNEHVNLTRITEKNEVYLKHFYDSITGAFAEPRLESEDLTLCDIGAGAGFPSLPLKIAFPQLKVTIVDSLNKRIAFLEDLVAKLGLTGVTLIHDRAETFSAKTSPYREKFDIVTARAVARLSVLSELCLPAAKVGGEFIAYKASAAPEELQQGGTAIKQLGGKVQKTVTLTLPGTDEERNIIVIDKIKATPKKYPRRPGLPSKKPIQ</sequence>
<dbReference type="EC" id="2.1.1.-" evidence="1"/>
<dbReference type="EMBL" id="AP007281">
    <property type="protein sequence ID" value="BAG24614.1"/>
    <property type="molecule type" value="Genomic_DNA"/>
</dbReference>
<dbReference type="RefSeq" id="WP_003669663.1">
    <property type="nucleotide sequence ID" value="NC_010609.1"/>
</dbReference>
<dbReference type="SMR" id="B2G582"/>
<dbReference type="KEGG" id="lrf:LAR_0098"/>
<dbReference type="HOGENOM" id="CLU_065341_0_2_9"/>
<dbReference type="GO" id="GO:0005829">
    <property type="term" value="C:cytosol"/>
    <property type="evidence" value="ECO:0007669"/>
    <property type="project" value="TreeGrafter"/>
</dbReference>
<dbReference type="GO" id="GO:0070043">
    <property type="term" value="F:rRNA (guanine-N7-)-methyltransferase activity"/>
    <property type="evidence" value="ECO:0007669"/>
    <property type="project" value="UniProtKB-UniRule"/>
</dbReference>
<dbReference type="CDD" id="cd02440">
    <property type="entry name" value="AdoMet_MTases"/>
    <property type="match status" value="1"/>
</dbReference>
<dbReference type="FunFam" id="3.40.50.150:FF:000041">
    <property type="entry name" value="Ribosomal RNA small subunit methyltransferase G"/>
    <property type="match status" value="1"/>
</dbReference>
<dbReference type="Gene3D" id="3.40.50.150">
    <property type="entry name" value="Vaccinia Virus protein VP39"/>
    <property type="match status" value="1"/>
</dbReference>
<dbReference type="HAMAP" id="MF_00074">
    <property type="entry name" value="16SrRNA_methyltr_G"/>
    <property type="match status" value="1"/>
</dbReference>
<dbReference type="InterPro" id="IPR003682">
    <property type="entry name" value="rRNA_ssu_MeTfrase_G"/>
</dbReference>
<dbReference type="InterPro" id="IPR029063">
    <property type="entry name" value="SAM-dependent_MTases_sf"/>
</dbReference>
<dbReference type="NCBIfam" id="TIGR00138">
    <property type="entry name" value="rsmG_gidB"/>
    <property type="match status" value="1"/>
</dbReference>
<dbReference type="PANTHER" id="PTHR31760">
    <property type="entry name" value="S-ADENOSYL-L-METHIONINE-DEPENDENT METHYLTRANSFERASES SUPERFAMILY PROTEIN"/>
    <property type="match status" value="1"/>
</dbReference>
<dbReference type="PANTHER" id="PTHR31760:SF0">
    <property type="entry name" value="S-ADENOSYL-L-METHIONINE-DEPENDENT METHYLTRANSFERASES SUPERFAMILY PROTEIN"/>
    <property type="match status" value="1"/>
</dbReference>
<dbReference type="Pfam" id="PF02527">
    <property type="entry name" value="GidB"/>
    <property type="match status" value="1"/>
</dbReference>
<dbReference type="PIRSF" id="PIRSF003078">
    <property type="entry name" value="GidB"/>
    <property type="match status" value="1"/>
</dbReference>
<dbReference type="SUPFAM" id="SSF53335">
    <property type="entry name" value="S-adenosyl-L-methionine-dependent methyltransferases"/>
    <property type="match status" value="1"/>
</dbReference>
<gene>
    <name evidence="1" type="primary">rsmG</name>
    <name type="ordered locus">LAR_0098</name>
</gene>
<evidence type="ECO:0000255" key="1">
    <source>
        <dbReference type="HAMAP-Rule" id="MF_00074"/>
    </source>
</evidence>
<reference key="1">
    <citation type="journal article" date="2008" name="DNA Res.">
        <title>Comparative genome analysis of Lactobacillus reuteri and Lactobacillus fermentum reveal a genomic island for reuterin and cobalamin production.</title>
        <authorList>
            <person name="Morita H."/>
            <person name="Toh H."/>
            <person name="Fukuda S."/>
            <person name="Horikawa H."/>
            <person name="Oshima K."/>
            <person name="Suzuki T."/>
            <person name="Murakami M."/>
            <person name="Hisamatsu S."/>
            <person name="Kato Y."/>
            <person name="Takizawa T."/>
            <person name="Fukuoka H."/>
            <person name="Yoshimura T."/>
            <person name="Itoh K."/>
            <person name="O'Sullivan D.J."/>
            <person name="McKay L.L."/>
            <person name="Ohno H."/>
            <person name="Kikuchi J."/>
            <person name="Masaoka T."/>
            <person name="Hattori M."/>
        </authorList>
    </citation>
    <scope>NUCLEOTIDE SEQUENCE [LARGE SCALE GENOMIC DNA]</scope>
    <source>
        <strain>JCM 1112</strain>
    </source>
</reference>
<feature type="chain" id="PRO_1000092633" description="Ribosomal RNA small subunit methyltransferase G">
    <location>
        <begin position="1"/>
        <end position="241"/>
    </location>
</feature>
<feature type="binding site" evidence="1">
    <location>
        <position position="79"/>
    </location>
    <ligand>
        <name>S-adenosyl-L-methionine</name>
        <dbReference type="ChEBI" id="CHEBI:59789"/>
    </ligand>
</feature>
<feature type="binding site" evidence="1">
    <location>
        <position position="84"/>
    </location>
    <ligand>
        <name>S-adenosyl-L-methionine</name>
        <dbReference type="ChEBI" id="CHEBI:59789"/>
    </ligand>
</feature>
<feature type="binding site" evidence="1">
    <location>
        <begin position="130"/>
        <end position="131"/>
    </location>
    <ligand>
        <name>S-adenosyl-L-methionine</name>
        <dbReference type="ChEBI" id="CHEBI:59789"/>
    </ligand>
</feature>
<feature type="binding site" evidence="1">
    <location>
        <position position="150"/>
    </location>
    <ligand>
        <name>S-adenosyl-L-methionine</name>
        <dbReference type="ChEBI" id="CHEBI:59789"/>
    </ligand>
</feature>
<organism>
    <name type="scientific">Limosilactobacillus reuteri subsp. reuteri (strain JCM 1112)</name>
    <name type="common">Lactobacillus reuteri</name>
    <dbReference type="NCBI Taxonomy" id="557433"/>
    <lineage>
        <taxon>Bacteria</taxon>
        <taxon>Bacillati</taxon>
        <taxon>Bacillota</taxon>
        <taxon>Bacilli</taxon>
        <taxon>Lactobacillales</taxon>
        <taxon>Lactobacillaceae</taxon>
        <taxon>Limosilactobacillus</taxon>
    </lineage>
</organism>
<keyword id="KW-0963">Cytoplasm</keyword>
<keyword id="KW-0489">Methyltransferase</keyword>
<keyword id="KW-0698">rRNA processing</keyword>
<keyword id="KW-0949">S-adenosyl-L-methionine</keyword>
<keyword id="KW-0808">Transferase</keyword>
<protein>
    <recommendedName>
        <fullName evidence="1">Ribosomal RNA small subunit methyltransferase G</fullName>
        <ecNumber evidence="1">2.1.1.-</ecNumber>
    </recommendedName>
    <alternativeName>
        <fullName evidence="1">16S rRNA 7-methylguanosine methyltransferase</fullName>
        <shortName evidence="1">16S rRNA m7G methyltransferase</shortName>
    </alternativeName>
</protein>